<feature type="chain" id="PRO_0000127817" description="Uncharacterized protein AF_0059">
    <location>
        <begin position="1"/>
        <end position="134"/>
    </location>
</feature>
<organism>
    <name type="scientific">Archaeoglobus fulgidus (strain ATCC 49558 / DSM 4304 / JCM 9628 / NBRC 100126 / VC-16)</name>
    <dbReference type="NCBI Taxonomy" id="224325"/>
    <lineage>
        <taxon>Archaea</taxon>
        <taxon>Methanobacteriati</taxon>
        <taxon>Methanobacteriota</taxon>
        <taxon>Archaeoglobi</taxon>
        <taxon>Archaeoglobales</taxon>
        <taxon>Archaeoglobaceae</taxon>
        <taxon>Archaeoglobus</taxon>
    </lineage>
</organism>
<sequence>MYRYPVEVIADTYLSKVGGYSYELDRNEIGINVKALEMNTSIIANETLATLKRFEEIRPYFLRRKFVVVGIEESMDCYEMSANGEVVLPEEMEGSMEVGESVIVNTVEAFRIDGDYSNIIKAIKWRLDNQILRN</sequence>
<proteinExistence type="predicted"/>
<name>Y059_ARCFU</name>
<reference key="1">
    <citation type="journal article" date="1997" name="Nature">
        <title>The complete genome sequence of the hyperthermophilic, sulphate-reducing archaeon Archaeoglobus fulgidus.</title>
        <authorList>
            <person name="Klenk H.-P."/>
            <person name="Clayton R.A."/>
            <person name="Tomb J.-F."/>
            <person name="White O."/>
            <person name="Nelson K.E."/>
            <person name="Ketchum K.A."/>
            <person name="Dodson R.J."/>
            <person name="Gwinn M.L."/>
            <person name="Hickey E.K."/>
            <person name="Peterson J.D."/>
            <person name="Richardson D.L."/>
            <person name="Kerlavage A.R."/>
            <person name="Graham D.E."/>
            <person name="Kyrpides N.C."/>
            <person name="Fleischmann R.D."/>
            <person name="Quackenbush J."/>
            <person name="Lee N.H."/>
            <person name="Sutton G.G."/>
            <person name="Gill S.R."/>
            <person name="Kirkness E.F."/>
            <person name="Dougherty B.A."/>
            <person name="McKenney K."/>
            <person name="Adams M.D."/>
            <person name="Loftus B.J."/>
            <person name="Peterson S.N."/>
            <person name="Reich C.I."/>
            <person name="McNeil L.K."/>
            <person name="Badger J.H."/>
            <person name="Glodek A."/>
            <person name="Zhou L."/>
            <person name="Overbeek R."/>
            <person name="Gocayne J.D."/>
            <person name="Weidman J.F."/>
            <person name="McDonald L.A."/>
            <person name="Utterback T.R."/>
            <person name="Cotton M.D."/>
            <person name="Spriggs T."/>
            <person name="Artiach P."/>
            <person name="Kaine B.P."/>
            <person name="Sykes S.M."/>
            <person name="Sadow P.W."/>
            <person name="D'Andrea K.P."/>
            <person name="Bowman C."/>
            <person name="Fujii C."/>
            <person name="Garland S.A."/>
            <person name="Mason T.M."/>
            <person name="Olsen G.J."/>
            <person name="Fraser C.M."/>
            <person name="Smith H.O."/>
            <person name="Woese C.R."/>
            <person name="Venter J.C."/>
        </authorList>
    </citation>
    <scope>NUCLEOTIDE SEQUENCE [LARGE SCALE GENOMIC DNA]</scope>
    <source>
        <strain>ATCC 49558 / DSM 4304 / JCM 9628 / NBRC 100126 / VC-16</strain>
    </source>
</reference>
<protein>
    <recommendedName>
        <fullName>Uncharacterized protein AF_0059</fullName>
    </recommendedName>
</protein>
<accession>O30177</accession>
<dbReference type="EMBL" id="AE000782">
    <property type="protein sequence ID" value="AAB91173.1"/>
    <property type="molecule type" value="Genomic_DNA"/>
</dbReference>
<dbReference type="PIR" id="C69257">
    <property type="entry name" value="C69257"/>
</dbReference>
<dbReference type="RefSeq" id="WP_010877573.1">
    <property type="nucleotide sequence ID" value="NC_000917.1"/>
</dbReference>
<dbReference type="STRING" id="224325.AF_0059"/>
<dbReference type="PaxDb" id="224325-AF_0059"/>
<dbReference type="EnsemblBacteria" id="AAB91173">
    <property type="protein sequence ID" value="AAB91173"/>
    <property type="gene ID" value="AF_0059"/>
</dbReference>
<dbReference type="GeneID" id="1483268"/>
<dbReference type="KEGG" id="afu:AF_0059"/>
<dbReference type="eggNOG" id="arCOG06109">
    <property type="taxonomic scope" value="Archaea"/>
</dbReference>
<dbReference type="HOGENOM" id="CLU_1801624_0_0_2"/>
<dbReference type="OrthoDB" id="50304at2157"/>
<dbReference type="Proteomes" id="UP000002199">
    <property type="component" value="Chromosome"/>
</dbReference>
<keyword id="KW-1185">Reference proteome</keyword>
<gene>
    <name type="ordered locus">AF_0059</name>
</gene>